<proteinExistence type="inferred from homology"/>
<keyword id="KW-0131">Cell cycle</keyword>
<keyword id="KW-0132">Cell division</keyword>
<keyword id="KW-0133">Cell shape</keyword>
<keyword id="KW-0961">Cell wall biogenesis/degradation</keyword>
<keyword id="KW-0963">Cytoplasm</keyword>
<keyword id="KW-0573">Peptidoglycan synthesis</keyword>
<keyword id="KW-0670">Pyruvate</keyword>
<keyword id="KW-1185">Reference proteome</keyword>
<keyword id="KW-0808">Transferase</keyword>
<feature type="chain" id="PRO_1000202930" description="UDP-N-acetylglucosamine 1-carboxyvinyltransferase">
    <location>
        <begin position="1"/>
        <end position="421"/>
    </location>
</feature>
<feature type="active site" description="Proton donor" evidence="1">
    <location>
        <position position="116"/>
    </location>
</feature>
<feature type="binding site" evidence="1">
    <location>
        <begin position="22"/>
        <end position="23"/>
    </location>
    <ligand>
        <name>phosphoenolpyruvate</name>
        <dbReference type="ChEBI" id="CHEBI:58702"/>
    </ligand>
</feature>
<feature type="binding site" evidence="1">
    <location>
        <position position="92"/>
    </location>
    <ligand>
        <name>UDP-N-acetyl-alpha-D-glucosamine</name>
        <dbReference type="ChEBI" id="CHEBI:57705"/>
    </ligand>
</feature>
<feature type="binding site" evidence="1">
    <location>
        <position position="307"/>
    </location>
    <ligand>
        <name>UDP-N-acetyl-alpha-D-glucosamine</name>
        <dbReference type="ChEBI" id="CHEBI:57705"/>
    </ligand>
</feature>
<feature type="binding site" evidence="1">
    <location>
        <position position="329"/>
    </location>
    <ligand>
        <name>UDP-N-acetyl-alpha-D-glucosamine</name>
        <dbReference type="ChEBI" id="CHEBI:57705"/>
    </ligand>
</feature>
<feature type="modified residue" description="2-(S-cysteinyl)pyruvic acid O-phosphothioketal" evidence="1">
    <location>
        <position position="116"/>
    </location>
</feature>
<dbReference type="EC" id="2.5.1.7" evidence="1"/>
<dbReference type="EMBL" id="CP001634">
    <property type="protein sequence ID" value="ACR80456.1"/>
    <property type="molecule type" value="Genomic_DNA"/>
</dbReference>
<dbReference type="RefSeq" id="WP_015869100.1">
    <property type="nucleotide sequence ID" value="NC_012785.1"/>
</dbReference>
<dbReference type="SMR" id="C5CFW2"/>
<dbReference type="STRING" id="521045.Kole_1771"/>
<dbReference type="KEGG" id="kol:Kole_1771"/>
<dbReference type="eggNOG" id="COG0766">
    <property type="taxonomic scope" value="Bacteria"/>
</dbReference>
<dbReference type="HOGENOM" id="CLU_027387_0_0_0"/>
<dbReference type="OrthoDB" id="9803760at2"/>
<dbReference type="UniPathway" id="UPA00219"/>
<dbReference type="Proteomes" id="UP000002382">
    <property type="component" value="Chromosome"/>
</dbReference>
<dbReference type="GO" id="GO:0005737">
    <property type="term" value="C:cytoplasm"/>
    <property type="evidence" value="ECO:0007669"/>
    <property type="project" value="UniProtKB-SubCell"/>
</dbReference>
<dbReference type="GO" id="GO:0008760">
    <property type="term" value="F:UDP-N-acetylglucosamine 1-carboxyvinyltransferase activity"/>
    <property type="evidence" value="ECO:0007669"/>
    <property type="project" value="UniProtKB-UniRule"/>
</dbReference>
<dbReference type="GO" id="GO:0051301">
    <property type="term" value="P:cell division"/>
    <property type="evidence" value="ECO:0007669"/>
    <property type="project" value="UniProtKB-KW"/>
</dbReference>
<dbReference type="GO" id="GO:0071555">
    <property type="term" value="P:cell wall organization"/>
    <property type="evidence" value="ECO:0007669"/>
    <property type="project" value="UniProtKB-KW"/>
</dbReference>
<dbReference type="GO" id="GO:0009252">
    <property type="term" value="P:peptidoglycan biosynthetic process"/>
    <property type="evidence" value="ECO:0007669"/>
    <property type="project" value="UniProtKB-UniRule"/>
</dbReference>
<dbReference type="GO" id="GO:0008360">
    <property type="term" value="P:regulation of cell shape"/>
    <property type="evidence" value="ECO:0007669"/>
    <property type="project" value="UniProtKB-KW"/>
</dbReference>
<dbReference type="GO" id="GO:0019277">
    <property type="term" value="P:UDP-N-acetylgalactosamine biosynthetic process"/>
    <property type="evidence" value="ECO:0007669"/>
    <property type="project" value="InterPro"/>
</dbReference>
<dbReference type="CDD" id="cd01555">
    <property type="entry name" value="UdpNAET"/>
    <property type="match status" value="1"/>
</dbReference>
<dbReference type="Gene3D" id="3.65.10.10">
    <property type="entry name" value="Enolpyruvate transferase domain"/>
    <property type="match status" value="2"/>
</dbReference>
<dbReference type="HAMAP" id="MF_00111">
    <property type="entry name" value="MurA"/>
    <property type="match status" value="1"/>
</dbReference>
<dbReference type="InterPro" id="IPR001986">
    <property type="entry name" value="Enolpyruvate_Tfrase_dom"/>
</dbReference>
<dbReference type="InterPro" id="IPR036968">
    <property type="entry name" value="Enolpyruvate_Tfrase_sf"/>
</dbReference>
<dbReference type="InterPro" id="IPR050068">
    <property type="entry name" value="MurA_subfamily"/>
</dbReference>
<dbReference type="InterPro" id="IPR013792">
    <property type="entry name" value="RNA3'P_cycl/enolpyr_Trfase_a/b"/>
</dbReference>
<dbReference type="InterPro" id="IPR005750">
    <property type="entry name" value="UDP_GlcNAc_COvinyl_MurA"/>
</dbReference>
<dbReference type="NCBIfam" id="TIGR01072">
    <property type="entry name" value="murA"/>
    <property type="match status" value="1"/>
</dbReference>
<dbReference type="NCBIfam" id="NF006873">
    <property type="entry name" value="PRK09369.1"/>
    <property type="match status" value="1"/>
</dbReference>
<dbReference type="PANTHER" id="PTHR43783">
    <property type="entry name" value="UDP-N-ACETYLGLUCOSAMINE 1-CARBOXYVINYLTRANSFERASE"/>
    <property type="match status" value="1"/>
</dbReference>
<dbReference type="PANTHER" id="PTHR43783:SF1">
    <property type="entry name" value="UDP-N-ACETYLGLUCOSAMINE 1-CARBOXYVINYLTRANSFERASE"/>
    <property type="match status" value="1"/>
</dbReference>
<dbReference type="Pfam" id="PF00275">
    <property type="entry name" value="EPSP_synthase"/>
    <property type="match status" value="1"/>
</dbReference>
<dbReference type="SUPFAM" id="SSF55205">
    <property type="entry name" value="EPT/RTPC-like"/>
    <property type="match status" value="1"/>
</dbReference>
<sequence>MSEIVVEGGRKLIGEVPISGSKNAALPILAAAVMIDEPVVLDNVPELKDVFTMLTILQRIGKKVSFRDNRVVVEPGNVLMGDVPYELVRMMRASFNVLGPLTMVCGWAKVGKPGGCNIGQRPVDFHIEGLKALGFLIKEEHGDVIAKKPSSFKEELYYKLPFPSVGATEQLMTVAALMSESKTIIENVAREPEIQDLQNFLNKAGAKIKGAGTDRIEIEGVEKLHGIEYHIIPDRIEAGTYLLAGVSTRGRVKVSNVIPEHLEALLKVLDELGVSITCDKNSIEVSVSGELKPIRVSTAPYPGFPTDLQPMLTAVLCTVPGESIIEEKVFENRFGYVDEMNRMSANIKVMNRVAHIVGVEKLSGAQIYAPDIRATAGMLIAALSAEGQTVIKNAAHIFRGYEKLKEKFTTIGAQIEVYPEE</sequence>
<organism>
    <name type="scientific">Kosmotoga olearia (strain ATCC BAA-1733 / DSM 21960 / TBF 19.5.1)</name>
    <dbReference type="NCBI Taxonomy" id="521045"/>
    <lineage>
        <taxon>Bacteria</taxon>
        <taxon>Thermotogati</taxon>
        <taxon>Thermotogota</taxon>
        <taxon>Thermotogae</taxon>
        <taxon>Kosmotogales</taxon>
        <taxon>Kosmotogaceae</taxon>
        <taxon>Kosmotoga</taxon>
    </lineage>
</organism>
<accession>C5CFW2</accession>
<evidence type="ECO:0000255" key="1">
    <source>
        <dbReference type="HAMAP-Rule" id="MF_00111"/>
    </source>
</evidence>
<comment type="function">
    <text evidence="1">Cell wall formation. Adds enolpyruvyl to UDP-N-acetylglucosamine.</text>
</comment>
<comment type="catalytic activity">
    <reaction evidence="1">
        <text>phosphoenolpyruvate + UDP-N-acetyl-alpha-D-glucosamine = UDP-N-acetyl-3-O-(1-carboxyvinyl)-alpha-D-glucosamine + phosphate</text>
        <dbReference type="Rhea" id="RHEA:18681"/>
        <dbReference type="ChEBI" id="CHEBI:43474"/>
        <dbReference type="ChEBI" id="CHEBI:57705"/>
        <dbReference type="ChEBI" id="CHEBI:58702"/>
        <dbReference type="ChEBI" id="CHEBI:68483"/>
        <dbReference type="EC" id="2.5.1.7"/>
    </reaction>
</comment>
<comment type="pathway">
    <text evidence="1">Cell wall biogenesis; peptidoglycan biosynthesis.</text>
</comment>
<comment type="subcellular location">
    <subcellularLocation>
        <location evidence="1">Cytoplasm</location>
    </subcellularLocation>
</comment>
<comment type="similarity">
    <text evidence="1">Belongs to the EPSP synthase family. MurA subfamily.</text>
</comment>
<protein>
    <recommendedName>
        <fullName evidence="1">UDP-N-acetylglucosamine 1-carboxyvinyltransferase</fullName>
        <ecNumber evidence="1">2.5.1.7</ecNumber>
    </recommendedName>
    <alternativeName>
        <fullName evidence="1">Enoylpyruvate transferase</fullName>
    </alternativeName>
    <alternativeName>
        <fullName evidence="1">UDP-N-acetylglucosamine enolpyruvyl transferase</fullName>
        <shortName evidence="1">EPT</shortName>
    </alternativeName>
</protein>
<name>MURA_KOSOT</name>
<reference key="1">
    <citation type="submission" date="2009-06" db="EMBL/GenBank/DDBJ databases">
        <title>Complete sequence of Thermotogales bacterium TBF 19.5.1.</title>
        <authorList>
            <consortium name="US DOE Joint Genome Institute"/>
            <person name="Lucas S."/>
            <person name="Copeland A."/>
            <person name="Lapidus A."/>
            <person name="Glavina del Rio T."/>
            <person name="Tice H."/>
            <person name="Bruce D."/>
            <person name="Goodwin L."/>
            <person name="Pitluck S."/>
            <person name="Chertkov O."/>
            <person name="Brettin T."/>
            <person name="Detter J.C."/>
            <person name="Han C."/>
            <person name="Schmutz J."/>
            <person name="Larimer F."/>
            <person name="Land M."/>
            <person name="Hauser L."/>
            <person name="Kyrpides N."/>
            <person name="Ovchinnikova G."/>
            <person name="Noll K."/>
        </authorList>
    </citation>
    <scope>NUCLEOTIDE SEQUENCE [LARGE SCALE GENOMIC DNA]</scope>
    <source>
        <strain>ATCC BAA-1733 / DSM 21960 / TBF 19.5.1</strain>
    </source>
</reference>
<gene>
    <name evidence="1" type="primary">murA</name>
    <name type="ordered locus">Kole_1771</name>
</gene>